<protein>
    <recommendedName>
        <fullName evidence="1">Hemin import ATP-binding protein HmuV</fullName>
        <ecNumber evidence="1">7.6.2.-</ecNumber>
    </recommendedName>
</protein>
<comment type="function">
    <text evidence="2">Part of the ABC transporter complex HmuTUV involved in hemin import. Responsible for energy coupling to the transport system (Probable).</text>
</comment>
<comment type="subunit">
    <text evidence="1">The complex is composed of two ATP-binding proteins (HmuV), two transmembrane proteins (HmuU) and a solute-binding protein (HmuT).</text>
</comment>
<comment type="subcellular location">
    <subcellularLocation>
        <location evidence="1">Cell inner membrane</location>
        <topology evidence="1">Peripheral membrane protein</topology>
    </subcellularLocation>
</comment>
<comment type="similarity">
    <text evidence="1">Belongs to the ABC transporter superfamily. Heme (hemin) importer (TC 3.A.1.14.5) family.</text>
</comment>
<evidence type="ECO:0000255" key="1">
    <source>
        <dbReference type="HAMAP-Rule" id="MF_01718"/>
    </source>
</evidence>
<evidence type="ECO:0000305" key="2">
    <source>
    </source>
</evidence>
<accession>O70014</accession>
<organism>
    <name type="scientific">Shigella dysenteriae</name>
    <dbReference type="NCBI Taxonomy" id="622"/>
    <lineage>
        <taxon>Bacteria</taxon>
        <taxon>Pseudomonadati</taxon>
        <taxon>Pseudomonadota</taxon>
        <taxon>Gammaproteobacteria</taxon>
        <taxon>Enterobacterales</taxon>
        <taxon>Enterobacteriaceae</taxon>
        <taxon>Shigella</taxon>
    </lineage>
</organism>
<name>HMUV_SHIDY</name>
<sequence>MISAQNLVYSLQGRRLTDNVSLTFPGGEIVAILGPNGAGKSTLLRQLTGYLQPDSGECRLFNKPLNEWSITELAKHRAVMRQNSHMAFPFSVQEVIQMGRHPHRTGNQDNETAQIMALCDCQALANRDYRQLSGGEQQRVQLARLLVQLWEPTPSPKWLFLDEPTSALDIHHQQHLFRLLRQLVHERQFNVCCVLHDLNLAARYADRIVLMQKGKVIANGKPQDVLTQQELTMLYGADITVLEDPANHSPLIVLDH</sequence>
<reference key="1">
    <citation type="journal article" date="1997" name="Infect. Immun.">
        <title>Identification of shuA, the gene encoding the heme receptor of Shigella dysenteriae, and analysis of invasion and intracellular multiplication of a shuA mutant.</title>
        <authorList>
            <person name="Mills M."/>
            <person name="Payne S.M."/>
        </authorList>
    </citation>
    <scope>NUCLEOTIDE SEQUENCE [GENOMIC DNA]</scope>
    <source>
        <strain>O-4576</strain>
    </source>
</reference>
<reference key="2">
    <citation type="journal article" date="1995" name="J. Bacteriol.">
        <title>Genetics and regulation of heme iron transport in Shigella dysenteriae and detection of an analogous system in Escherichia coli O157:H7.</title>
        <authorList>
            <person name="Mills M."/>
            <person name="Payne S.M."/>
        </authorList>
    </citation>
    <scope>FUNCTION IN HEMIN TRANSPORT</scope>
    <source>
        <strain>O-4576</strain>
    </source>
</reference>
<gene>
    <name evidence="1" type="primary">hmuV</name>
    <name type="synonym">shuV</name>
</gene>
<feature type="chain" id="PRO_0000269628" description="Hemin import ATP-binding protein HmuV">
    <location>
        <begin position="1"/>
        <end position="256"/>
    </location>
</feature>
<feature type="domain" description="ABC transporter" evidence="1">
    <location>
        <begin position="2"/>
        <end position="238"/>
    </location>
</feature>
<feature type="binding site" evidence="1">
    <location>
        <begin position="34"/>
        <end position="41"/>
    </location>
    <ligand>
        <name>ATP</name>
        <dbReference type="ChEBI" id="CHEBI:30616"/>
    </ligand>
</feature>
<proteinExistence type="evidence at protein level"/>
<keyword id="KW-0067">ATP-binding</keyword>
<keyword id="KW-0997">Cell inner membrane</keyword>
<keyword id="KW-1003">Cell membrane</keyword>
<keyword id="KW-0472">Membrane</keyword>
<keyword id="KW-0547">Nucleotide-binding</keyword>
<keyword id="KW-1278">Translocase</keyword>
<keyword id="KW-0813">Transport</keyword>
<dbReference type="EC" id="7.6.2.-" evidence="1"/>
<dbReference type="EMBL" id="U64516">
    <property type="protein sequence ID" value="AAC27811.1"/>
    <property type="molecule type" value="Genomic_DNA"/>
</dbReference>
<dbReference type="RefSeq" id="WP_005019012.1">
    <property type="nucleotide sequence ID" value="NZ_QWTT01000105.1"/>
</dbReference>
<dbReference type="SMR" id="O70014"/>
<dbReference type="GO" id="GO:0005886">
    <property type="term" value="C:plasma membrane"/>
    <property type="evidence" value="ECO:0007669"/>
    <property type="project" value="UniProtKB-SubCell"/>
</dbReference>
<dbReference type="GO" id="GO:0005524">
    <property type="term" value="F:ATP binding"/>
    <property type="evidence" value="ECO:0007669"/>
    <property type="project" value="UniProtKB-KW"/>
</dbReference>
<dbReference type="GO" id="GO:0016887">
    <property type="term" value="F:ATP hydrolysis activity"/>
    <property type="evidence" value="ECO:0007669"/>
    <property type="project" value="InterPro"/>
</dbReference>
<dbReference type="CDD" id="cd03214">
    <property type="entry name" value="ABC_Iron-Siderophores_B12_Hemin"/>
    <property type="match status" value="1"/>
</dbReference>
<dbReference type="FunFam" id="3.40.50.300:FF:000134">
    <property type="entry name" value="Iron-enterobactin ABC transporter ATP-binding protein"/>
    <property type="match status" value="1"/>
</dbReference>
<dbReference type="Gene3D" id="3.40.50.300">
    <property type="entry name" value="P-loop containing nucleotide triphosphate hydrolases"/>
    <property type="match status" value="1"/>
</dbReference>
<dbReference type="InterPro" id="IPR003593">
    <property type="entry name" value="AAA+_ATPase"/>
</dbReference>
<dbReference type="InterPro" id="IPR003439">
    <property type="entry name" value="ABC_transporter-like_ATP-bd"/>
</dbReference>
<dbReference type="InterPro" id="IPR017871">
    <property type="entry name" value="ABC_transporter-like_CS"/>
</dbReference>
<dbReference type="InterPro" id="IPR027417">
    <property type="entry name" value="P-loop_NTPase"/>
</dbReference>
<dbReference type="NCBIfam" id="NF010068">
    <property type="entry name" value="PRK13548.1"/>
    <property type="match status" value="1"/>
</dbReference>
<dbReference type="PANTHER" id="PTHR42794">
    <property type="entry name" value="HEMIN IMPORT ATP-BINDING PROTEIN HMUV"/>
    <property type="match status" value="1"/>
</dbReference>
<dbReference type="PANTHER" id="PTHR42794:SF1">
    <property type="entry name" value="HEMIN IMPORT ATP-BINDING PROTEIN HMUV"/>
    <property type="match status" value="1"/>
</dbReference>
<dbReference type="Pfam" id="PF00005">
    <property type="entry name" value="ABC_tran"/>
    <property type="match status" value="1"/>
</dbReference>
<dbReference type="SMART" id="SM00382">
    <property type="entry name" value="AAA"/>
    <property type="match status" value="1"/>
</dbReference>
<dbReference type="SUPFAM" id="SSF52540">
    <property type="entry name" value="P-loop containing nucleoside triphosphate hydrolases"/>
    <property type="match status" value="1"/>
</dbReference>
<dbReference type="PROSITE" id="PS00211">
    <property type="entry name" value="ABC_TRANSPORTER_1"/>
    <property type="match status" value="1"/>
</dbReference>
<dbReference type="PROSITE" id="PS50893">
    <property type="entry name" value="ABC_TRANSPORTER_2"/>
    <property type="match status" value="1"/>
</dbReference>
<dbReference type="PROSITE" id="PS51261">
    <property type="entry name" value="HMUV"/>
    <property type="match status" value="1"/>
</dbReference>